<keyword id="KW-0002">3D-structure</keyword>
<keyword id="KW-0046">Antibiotic resistance</keyword>
<keyword id="KW-0998">Cell outer membrane</keyword>
<keyword id="KW-0903">Direct protein sequencing</keyword>
<keyword id="KW-0472">Membrane</keyword>
<keyword id="KW-1185">Reference proteome</keyword>
<keyword id="KW-0677">Repeat</keyword>
<keyword id="KW-0732">Signal</keyword>
<keyword id="KW-0812">Transmembrane</keyword>
<keyword id="KW-1134">Transmembrane beta strand</keyword>
<keyword id="KW-0813">Transport</keyword>
<sequence length="493" mass="53741">MKKLLPILIGLSLSGFSSLSQAENLMQVYQQARLSNPELRKSAADRDAAFEKINEARSPLLPQLGLGADYTYSNGYRDANGINSNATSASLQLTQSIFDMSKWRALTLQEKAAGIQDVTYQTDQQTLILNTATAYFNVLNAIDVLSYTQAQKEAIYRQLDQTTQRFNVGLVAITDVQNARAQYDTVLANEVTARNNLDNAVEQLRQITGNYYPELAALNVENFKTDKPQPVNALLKEAEKRNLSLLQARLSQDLAREQIRQAQDGHLPTLDLTASTGISDTSYSGSKTRGAAGTQYDDSNMGQNKVGLSFSLPIYQGGMVNSQVKQAQYNFVGASEQLESAHRSVVQTVRSSFNNINASISSINAYKQAVVSAQSSLDAMEAGYSVGTRTIVDVLDATTTLYNAKQELANARYNYLINQLNIKSALGTLNEQDLLALNNALSKPVSTNPENVAPQTPEQNAIADGYAPDSPAPVVQQTSARTTTSNGHNPFRN</sequence>
<organism>
    <name type="scientific">Escherichia coli (strain K12)</name>
    <dbReference type="NCBI Taxonomy" id="83333"/>
    <lineage>
        <taxon>Bacteria</taxon>
        <taxon>Pseudomonadati</taxon>
        <taxon>Pseudomonadota</taxon>
        <taxon>Gammaproteobacteria</taxon>
        <taxon>Enterobacterales</taxon>
        <taxon>Enterobacteriaceae</taxon>
        <taxon>Escherichia</taxon>
    </lineage>
</organism>
<dbReference type="EMBL" id="X00016">
    <property type="protein sequence ID" value="CAA24914.1"/>
    <property type="molecule type" value="Genomic_DNA"/>
</dbReference>
<dbReference type="EMBL" id="X54049">
    <property type="protein sequence ID" value="CAA37982.1"/>
    <property type="status" value="ALT_INIT"/>
    <property type="molecule type" value="Genomic_DNA"/>
</dbReference>
<dbReference type="EMBL" id="U28377">
    <property type="protein sequence ID" value="AAA69203.1"/>
    <property type="status" value="ALT_INIT"/>
    <property type="molecule type" value="Genomic_DNA"/>
</dbReference>
<dbReference type="EMBL" id="U00096">
    <property type="protein sequence ID" value="AAC76071.2"/>
    <property type="molecule type" value="Genomic_DNA"/>
</dbReference>
<dbReference type="EMBL" id="AP009048">
    <property type="protein sequence ID" value="BAE77091.1"/>
    <property type="molecule type" value="Genomic_DNA"/>
</dbReference>
<dbReference type="EMBL" id="V01505">
    <property type="protein sequence ID" value="CAA24751.1"/>
    <property type="status" value="ALT_INIT"/>
    <property type="molecule type" value="Genomic_DNA"/>
</dbReference>
<dbReference type="PIR" id="A65091">
    <property type="entry name" value="MMECTC"/>
</dbReference>
<dbReference type="RefSeq" id="NP_417507.2">
    <property type="nucleotide sequence ID" value="NC_000913.3"/>
</dbReference>
<dbReference type="RefSeq" id="WP_000735278.1">
    <property type="nucleotide sequence ID" value="NZ_STEB01000001.1"/>
</dbReference>
<dbReference type="PDB" id="1EK9">
    <property type="method" value="X-ray"/>
    <property type="resolution" value="2.10 A"/>
    <property type="chains" value="A/B/C=23-450"/>
</dbReference>
<dbReference type="PDB" id="1TQQ">
    <property type="method" value="X-ray"/>
    <property type="resolution" value="2.75 A"/>
    <property type="chains" value="A/B/C=23-493"/>
</dbReference>
<dbReference type="PDB" id="2VDD">
    <property type="method" value="X-ray"/>
    <property type="resolution" value="3.30 A"/>
    <property type="chains" value="A/B/C=1-450"/>
</dbReference>
<dbReference type="PDB" id="2VDE">
    <property type="method" value="X-ray"/>
    <property type="resolution" value="3.20 A"/>
    <property type="chains" value="A/B/C=1-450"/>
</dbReference>
<dbReference type="PDB" id="2WMZ">
    <property type="method" value="X-ray"/>
    <property type="resolution" value="2.90 A"/>
    <property type="chains" value="A/B/C=23-450"/>
</dbReference>
<dbReference type="PDB" id="2XMN">
    <property type="method" value="X-ray"/>
    <property type="resolution" value="2.85 A"/>
    <property type="chains" value="A/B/C=23-450"/>
</dbReference>
<dbReference type="PDB" id="5NG5">
    <property type="method" value="EM"/>
    <property type="resolution" value="6.50 A"/>
    <property type="chains" value="C/F/I=1-493"/>
</dbReference>
<dbReference type="PDB" id="5NIK">
    <property type="method" value="EM"/>
    <property type="resolution" value="3.30 A"/>
    <property type="chains" value="A/B/C=23-493"/>
</dbReference>
<dbReference type="PDB" id="5NIL">
    <property type="method" value="EM"/>
    <property type="resolution" value="5.30 A"/>
    <property type="chains" value="A/B/C=23-493"/>
</dbReference>
<dbReference type="PDB" id="5O66">
    <property type="method" value="EM"/>
    <property type="resolution" value="5.90 A"/>
    <property type="chains" value="A/B/C=1-493"/>
</dbReference>
<dbReference type="PDB" id="5V5S">
    <property type="method" value="EM"/>
    <property type="resolution" value="6.50 A"/>
    <property type="chains" value="A/B/C=23-464"/>
</dbReference>
<dbReference type="PDB" id="6WXH">
    <property type="method" value="EM"/>
    <property type="resolution" value="3.09 A"/>
    <property type="chains" value="A/B/C=1-493"/>
</dbReference>
<dbReference type="PDB" id="6WXI">
    <property type="method" value="EM"/>
    <property type="resolution" value="2.84 A"/>
    <property type="chains" value="A/B/C=1-493"/>
</dbReference>
<dbReference type="PDBsum" id="1EK9"/>
<dbReference type="PDBsum" id="1TQQ"/>
<dbReference type="PDBsum" id="2VDD"/>
<dbReference type="PDBsum" id="2VDE"/>
<dbReference type="PDBsum" id="2WMZ"/>
<dbReference type="PDBsum" id="2XMN"/>
<dbReference type="PDBsum" id="5NG5"/>
<dbReference type="PDBsum" id="5NIK"/>
<dbReference type="PDBsum" id="5NIL"/>
<dbReference type="PDBsum" id="5O66"/>
<dbReference type="PDBsum" id="5V5S"/>
<dbReference type="PDBsum" id="6WXH"/>
<dbReference type="PDBsum" id="6WXI"/>
<dbReference type="EMDB" id="EMD-21959"/>
<dbReference type="EMDB" id="EMD-21960"/>
<dbReference type="EMDB" id="EMD-3636"/>
<dbReference type="EMDB" id="EMD-3652"/>
<dbReference type="EMDB" id="EMD-3653"/>
<dbReference type="EMDB" id="EMD-8636"/>
<dbReference type="EMDB" id="EMD-8640"/>
<dbReference type="SMR" id="P02930"/>
<dbReference type="BioGRID" id="4263248">
    <property type="interactions" value="406"/>
</dbReference>
<dbReference type="BioGRID" id="851838">
    <property type="interactions" value="1"/>
</dbReference>
<dbReference type="ComplexPortal" id="CPX-2107">
    <property type="entry name" value="MacAB-TolC ABC transporter complex"/>
</dbReference>
<dbReference type="ComplexPortal" id="CPX-2119">
    <property type="entry name" value="MdtABC-TolC multidrug efflux transport complex"/>
</dbReference>
<dbReference type="ComplexPortal" id="CPX-4263">
    <property type="entry name" value="AcrAB-TolC multidrug efflux transport complex"/>
</dbReference>
<dbReference type="ComplexPortal" id="CPX-4264">
    <property type="entry name" value="AcrAD-TolC multidrug efflux transport complex"/>
</dbReference>
<dbReference type="ComplexPortal" id="CPX-4265">
    <property type="entry name" value="AcrEF-TolC multidrug efflux transport complex"/>
</dbReference>
<dbReference type="ComplexPortal" id="CPX-4268">
    <property type="entry name" value="EmrAB-TolC multidrug efflux transport system"/>
</dbReference>
<dbReference type="ComplexPortal" id="CPX-4273">
    <property type="entry name" value="EmrKY-TolC multidrug efflux transport system"/>
</dbReference>
<dbReference type="DIP" id="DIP-11007N"/>
<dbReference type="FunCoup" id="P02930">
    <property type="interactions" value="439"/>
</dbReference>
<dbReference type="IntAct" id="P02930">
    <property type="interactions" value="7"/>
</dbReference>
<dbReference type="MINT" id="P02930"/>
<dbReference type="STRING" id="511145.b3035"/>
<dbReference type="ChEMBL" id="CHEMBL3309023"/>
<dbReference type="DrugBank" id="DB03350">
    <property type="generic name" value="Cobalt hexammine ion"/>
</dbReference>
<dbReference type="TCDB" id="1.B.17.1.1">
    <property type="family name" value="the outer membrane factor (omf) family"/>
</dbReference>
<dbReference type="jPOST" id="P02930"/>
<dbReference type="PaxDb" id="511145-b3035"/>
<dbReference type="EnsemblBacteria" id="AAC76071">
    <property type="protein sequence ID" value="AAC76071"/>
    <property type="gene ID" value="b3035"/>
</dbReference>
<dbReference type="GeneID" id="93778958"/>
<dbReference type="GeneID" id="947521"/>
<dbReference type="KEGG" id="ecj:JW5503"/>
<dbReference type="KEGG" id="eco:b3035"/>
<dbReference type="KEGG" id="ecoc:C3026_16575"/>
<dbReference type="PATRIC" id="fig|1411691.4.peg.3696"/>
<dbReference type="EchoBASE" id="EB1002"/>
<dbReference type="eggNOG" id="COG1538">
    <property type="taxonomic scope" value="Bacteria"/>
</dbReference>
<dbReference type="HOGENOM" id="CLU_012817_0_2_6"/>
<dbReference type="InParanoid" id="P02930"/>
<dbReference type="OMA" id="YNAKQQL"/>
<dbReference type="OrthoDB" id="9813458at2"/>
<dbReference type="PhylomeDB" id="P02930"/>
<dbReference type="BioCyc" id="EcoCyc:EG11009-MONOMER"/>
<dbReference type="BioCyc" id="MetaCyc:EG11009-MONOMER"/>
<dbReference type="EvolutionaryTrace" id="P02930"/>
<dbReference type="PRO" id="PR:P02930"/>
<dbReference type="Proteomes" id="UP000000625">
    <property type="component" value="Chromosome"/>
</dbReference>
<dbReference type="GO" id="GO:0009279">
    <property type="term" value="C:cell outer membrane"/>
    <property type="evidence" value="ECO:0000314"/>
    <property type="project" value="EcoCyc"/>
</dbReference>
<dbReference type="GO" id="GO:1990281">
    <property type="term" value="C:efflux pump complex"/>
    <property type="evidence" value="ECO:0000314"/>
    <property type="project" value="EcoCyc"/>
</dbReference>
<dbReference type="GO" id="GO:1990196">
    <property type="term" value="C:MacAB-TolC complex"/>
    <property type="evidence" value="ECO:0000314"/>
    <property type="project" value="EcoCyc"/>
</dbReference>
<dbReference type="GO" id="GO:0016020">
    <property type="term" value="C:membrane"/>
    <property type="evidence" value="ECO:0000314"/>
    <property type="project" value="CAFA"/>
</dbReference>
<dbReference type="GO" id="GO:0030288">
    <property type="term" value="C:outer membrane-bounded periplasmic space"/>
    <property type="evidence" value="ECO:0000314"/>
    <property type="project" value="EcoCyc"/>
</dbReference>
<dbReference type="GO" id="GO:0098567">
    <property type="term" value="C:periplasmic side of plasma membrane"/>
    <property type="evidence" value="ECO:0000303"/>
    <property type="project" value="ComplexPortal"/>
</dbReference>
<dbReference type="GO" id="GO:0015125">
    <property type="term" value="F:bile acid transmembrane transporter activity"/>
    <property type="evidence" value="ECO:0000315"/>
    <property type="project" value="EcoCyc"/>
</dbReference>
<dbReference type="GO" id="GO:0015562">
    <property type="term" value="F:efflux transmembrane transporter activity"/>
    <property type="evidence" value="ECO:0000315"/>
    <property type="project" value="EcoCyc"/>
</dbReference>
<dbReference type="GO" id="GO:0042931">
    <property type="term" value="F:enterobactin transmembrane transporter activity"/>
    <property type="evidence" value="ECO:0000269"/>
    <property type="project" value="EcoCyc"/>
</dbReference>
<dbReference type="GO" id="GO:0042802">
    <property type="term" value="F:identical protein binding"/>
    <property type="evidence" value="ECO:0000353"/>
    <property type="project" value="IntAct"/>
</dbReference>
<dbReference type="GO" id="GO:0005216">
    <property type="term" value="F:monoatomic ion channel activity"/>
    <property type="evidence" value="ECO:0000314"/>
    <property type="project" value="CAFA"/>
</dbReference>
<dbReference type="GO" id="GO:0015288">
    <property type="term" value="F:porin activity"/>
    <property type="evidence" value="ECO:0000314"/>
    <property type="project" value="EcoCyc"/>
</dbReference>
<dbReference type="GO" id="GO:0015721">
    <property type="term" value="P:bile acid and bile salt transport"/>
    <property type="evidence" value="ECO:0000315"/>
    <property type="project" value="EcoCyc"/>
</dbReference>
<dbReference type="GO" id="GO:0042930">
    <property type="term" value="P:enterobactin transport"/>
    <property type="evidence" value="ECO:0000316"/>
    <property type="project" value="EcoliWiki"/>
</dbReference>
<dbReference type="GO" id="GO:0034220">
    <property type="term" value="P:monoatomic ion transmembrane transport"/>
    <property type="evidence" value="ECO:0000314"/>
    <property type="project" value="CAFA"/>
</dbReference>
<dbReference type="GO" id="GO:0046677">
    <property type="term" value="P:response to antibiotic"/>
    <property type="evidence" value="ECO:0000315"/>
    <property type="project" value="EcoCyc"/>
</dbReference>
<dbReference type="GO" id="GO:0009636">
    <property type="term" value="P:response to toxic substance"/>
    <property type="evidence" value="ECO:0000315"/>
    <property type="project" value="EcoCyc"/>
</dbReference>
<dbReference type="GO" id="GO:0009410">
    <property type="term" value="P:response to xenobiotic stimulus"/>
    <property type="evidence" value="ECO:0000315"/>
    <property type="project" value="EcoCyc"/>
</dbReference>
<dbReference type="GO" id="GO:0140330">
    <property type="term" value="P:xenobiotic detoxification by transmembrane export across the cell outer membrane"/>
    <property type="evidence" value="ECO:0000314"/>
    <property type="project" value="ComplexPortal"/>
</dbReference>
<dbReference type="GO" id="GO:1990961">
    <property type="term" value="P:xenobiotic detoxification by transmembrane export across the plasma membrane"/>
    <property type="evidence" value="ECO:0000314"/>
    <property type="project" value="ComplexPortal"/>
</dbReference>
<dbReference type="FunFam" id="1.20.1600.10:FF:000001">
    <property type="entry name" value="TolC outer membrane channel"/>
    <property type="match status" value="1"/>
</dbReference>
<dbReference type="Gene3D" id="1.20.1600.10">
    <property type="entry name" value="Outer membrane efflux proteins (OEP)"/>
    <property type="match status" value="1"/>
</dbReference>
<dbReference type="InterPro" id="IPR051906">
    <property type="entry name" value="Bacterial_OMF"/>
</dbReference>
<dbReference type="InterPro" id="IPR003423">
    <property type="entry name" value="OMP_efflux"/>
</dbReference>
<dbReference type="InterPro" id="IPR010130">
    <property type="entry name" value="T1SS_OMP_TolC"/>
</dbReference>
<dbReference type="NCBIfam" id="NF007002">
    <property type="entry name" value="PRK09465.1"/>
    <property type="match status" value="1"/>
</dbReference>
<dbReference type="NCBIfam" id="TIGR01844">
    <property type="entry name" value="type_I_sec_TolC"/>
    <property type="match status" value="1"/>
</dbReference>
<dbReference type="PANTHER" id="PTHR30026">
    <property type="entry name" value="OUTER MEMBRANE PROTEIN TOLC"/>
    <property type="match status" value="1"/>
</dbReference>
<dbReference type="PANTHER" id="PTHR30026:SF20">
    <property type="entry name" value="OUTER MEMBRANE PROTEIN TOLC"/>
    <property type="match status" value="1"/>
</dbReference>
<dbReference type="Pfam" id="PF02321">
    <property type="entry name" value="OEP"/>
    <property type="match status" value="2"/>
</dbReference>
<dbReference type="SUPFAM" id="SSF56954">
    <property type="entry name" value="Outer membrane efflux proteins (OEP)"/>
    <property type="match status" value="1"/>
</dbReference>
<evidence type="ECO:0000256" key="1">
    <source>
        <dbReference type="SAM" id="MobiDB-lite"/>
    </source>
</evidence>
<evidence type="ECO:0000269" key="2">
    <source>
    </source>
</evidence>
<evidence type="ECO:0000269" key="3">
    <source>
    </source>
</evidence>
<evidence type="ECO:0000269" key="4">
    <source>
    </source>
</evidence>
<evidence type="ECO:0000269" key="5">
    <source>
    </source>
</evidence>
<evidence type="ECO:0000269" key="6">
    <source>
    </source>
</evidence>
<evidence type="ECO:0000269" key="7">
    <source>
    </source>
</evidence>
<evidence type="ECO:0000269" key="8">
    <source>
    </source>
</evidence>
<evidence type="ECO:0000269" key="9">
    <source>
    </source>
</evidence>
<evidence type="ECO:0000269" key="10">
    <source>
    </source>
</evidence>
<evidence type="ECO:0000269" key="11">
    <source>
    </source>
</evidence>
<evidence type="ECO:0000269" key="12">
    <source>
    </source>
</evidence>
<evidence type="ECO:0000269" key="13">
    <source>
    </source>
</evidence>
<evidence type="ECO:0000269" key="14">
    <source>
    </source>
</evidence>
<evidence type="ECO:0000269" key="15">
    <source>
    </source>
</evidence>
<evidence type="ECO:0000269" key="16">
    <source>
    </source>
</evidence>
<evidence type="ECO:0000269" key="17">
    <source>
    </source>
</evidence>
<evidence type="ECO:0000305" key="18"/>
<evidence type="ECO:0007829" key="19">
    <source>
        <dbReference type="PDB" id="1EK9"/>
    </source>
</evidence>
<evidence type="ECO:0007829" key="20">
    <source>
        <dbReference type="PDB" id="2VDD"/>
    </source>
</evidence>
<evidence type="ECO:0007829" key="21">
    <source>
        <dbReference type="PDB" id="2VDE"/>
    </source>
</evidence>
<evidence type="ECO:0007829" key="22">
    <source>
        <dbReference type="PDB" id="6WXI"/>
    </source>
</evidence>
<gene>
    <name type="primary">tolC</name>
    <name type="synonym">colE1-i</name>
    <name type="synonym">mtcB</name>
    <name type="synonym">mukA</name>
    <name type="synonym">refI</name>
    <name type="synonym">toc</name>
    <name type="synonym">weeA</name>
    <name type="ordered locus">b3035</name>
    <name type="ordered locus">JW5503</name>
</gene>
<protein>
    <recommendedName>
        <fullName>Outer membrane protein TolC</fullName>
    </recommendedName>
    <alternativeName>
        <fullName>Multidrug efflux pump subunit TolC</fullName>
    </alternativeName>
    <alternativeName>
        <fullName>Outer membrane factor TolC</fullName>
    </alternativeName>
</protein>
<reference key="1">
    <citation type="journal article" date="1983" name="Nucleic Acids Res.">
        <title>Primary structure of the tolC gene that codes for an outer membrane protein of Escherichia coli K12.</title>
        <authorList>
            <person name="Hackett J."/>
            <person name="Reeves P."/>
        </authorList>
    </citation>
    <scope>NUCLEOTIDE SEQUENCE [GENOMIC DNA]</scope>
    <source>
        <strain>K12</strain>
    </source>
</reference>
<reference key="2">
    <citation type="journal article" date="1990" name="Nucleic Acids Res.">
        <title>Nucleotide sequence of the tolC gene of Escherichia coli.</title>
        <authorList>
            <person name="Niki H."/>
            <person name="Imamura R."/>
            <person name="Ogura T."/>
            <person name="Hiraga S."/>
        </authorList>
    </citation>
    <scope>NUCLEOTIDE SEQUENCE [GENOMIC DNA]</scope>
    <source>
        <strain>K12</strain>
    </source>
</reference>
<reference key="3">
    <citation type="journal article" date="1997" name="Science">
        <title>The complete genome sequence of Escherichia coli K-12.</title>
        <authorList>
            <person name="Blattner F.R."/>
            <person name="Plunkett G. III"/>
            <person name="Bloch C.A."/>
            <person name="Perna N.T."/>
            <person name="Burland V."/>
            <person name="Riley M."/>
            <person name="Collado-Vides J."/>
            <person name="Glasner J.D."/>
            <person name="Rode C.K."/>
            <person name="Mayhew G.F."/>
            <person name="Gregor J."/>
            <person name="Davis N.W."/>
            <person name="Kirkpatrick H.A."/>
            <person name="Goeden M.A."/>
            <person name="Rose D.J."/>
            <person name="Mau B."/>
            <person name="Shao Y."/>
        </authorList>
    </citation>
    <scope>NUCLEOTIDE SEQUENCE [LARGE SCALE GENOMIC DNA]</scope>
    <source>
        <strain>K12 / MG1655 / ATCC 47076</strain>
    </source>
</reference>
<reference key="4">
    <citation type="journal article" date="2006" name="Mol. Syst. Biol.">
        <title>Highly accurate genome sequences of Escherichia coli K-12 strains MG1655 and W3110.</title>
        <authorList>
            <person name="Hayashi K."/>
            <person name="Morooka N."/>
            <person name="Yamamoto Y."/>
            <person name="Fujita K."/>
            <person name="Isono K."/>
            <person name="Choi S."/>
            <person name="Ohtsubo E."/>
            <person name="Baba T."/>
            <person name="Wanner B.L."/>
            <person name="Mori H."/>
            <person name="Horiuchi T."/>
        </authorList>
    </citation>
    <scope>NUCLEOTIDE SEQUENCE [LARGE SCALE GENOMIC DNA]</scope>
    <source>
        <strain>K12 / W3110 / ATCC 27325 / DSM 5911</strain>
    </source>
</reference>
<reference key="5">
    <citation type="journal article" date="1983" name="FEBS Lett.">
        <title>The TolC protein of Escherichia coli K12 is synthesised in a precursor form.</title>
        <authorList>
            <person name="Hackett J."/>
            <person name="Misra R."/>
            <person name="Reeves P."/>
        </authorList>
    </citation>
    <scope>NUCLEOTIDE SEQUENCE [GENOMIC DNA] OF 1-45</scope>
    <source>
        <strain>K12</strain>
    </source>
</reference>
<reference key="6">
    <citation type="journal article" date="1983" name="J. Bacteriol.">
        <title>Identification and characterization of the TolC protein, an outer membrane protein from Escherichia coli.</title>
        <authorList>
            <person name="Morona R."/>
            <person name="Manning P.A."/>
            <person name="Reeves P."/>
        </authorList>
    </citation>
    <scope>PROTEIN SEQUENCE OF 23-34</scope>
    <scope>FUNCTION</scope>
    <scope>SUBCELLULAR LOCATION</scope>
    <source>
        <strain>K12</strain>
    </source>
</reference>
<reference key="7">
    <citation type="journal article" date="1997" name="Electrophoresis">
        <title>Comparing the predicted and observed properties of proteins encoded in the genome of Escherichia coli K-12.</title>
        <authorList>
            <person name="Link A.J."/>
            <person name="Robison K."/>
            <person name="Church G.M."/>
        </authorList>
    </citation>
    <scope>PROTEIN SEQUENCE OF 23-34</scope>
    <source>
        <strain>K12 / EMG2</strain>
    </source>
</reference>
<reference key="8">
    <citation type="journal article" date="1998" name="Electrophoresis">
        <title>Extraction of membrane proteins by differential solubilization for separation using two-dimensional gel electrophoresis.</title>
        <authorList>
            <person name="Molloy M.P."/>
            <person name="Herbert B.R."/>
            <person name="Walsh B.J."/>
            <person name="Tyler M.I."/>
            <person name="Traini M."/>
            <person name="Sanchez J.-C."/>
            <person name="Hochstrasser D.F."/>
            <person name="Williams K.L."/>
            <person name="Gooley A.A."/>
        </authorList>
    </citation>
    <scope>PROTEIN SEQUENCE OF 23-27</scope>
    <source>
        <strain>K12 / W3110 / ATCC 27325 / DSM 5911</strain>
    </source>
</reference>
<reference key="9">
    <citation type="journal article" date="1997" name="Mol. Microbiol.">
        <title>Structure of TolC, the outer membrane component of the bacterial type I efflux system, derived from two-dimensional crystals.</title>
        <authorList>
            <person name="Koronakis V."/>
            <person name="Li J."/>
            <person name="Koronakis E."/>
            <person name="Stauffer K."/>
        </authorList>
    </citation>
    <scope>SUBUNIT</scope>
    <scope>SUBCELLULAR LOCATION</scope>
</reference>
<reference key="10">
    <citation type="journal article" date="2001" name="J. Bacteriol.">
        <title>Suppression of hypersensitivity of Escherichia coli acrB mutant to organic solvents by integrational activation of the acrEF operon with the IS1 or IS2 element.</title>
        <authorList>
            <person name="Kobayashi K."/>
            <person name="Tsukagoshi N."/>
            <person name="Aono R."/>
        </authorList>
    </citation>
    <scope>FUNCTION IN ACREF-TOLC EFFLUX SYSTEM</scope>
</reference>
<reference key="11">
    <citation type="journal article" date="2004" name="Mol. Microbiol.">
        <title>Interactions underlying assembly of the Escherichia coli AcrAB-TolC multidrug efflux system.</title>
        <authorList>
            <person name="Touze T."/>
            <person name="Eswaran J."/>
            <person name="Bokma E."/>
            <person name="Koronakis E."/>
            <person name="Hughes C."/>
            <person name="Koronakis V."/>
        </authorList>
    </citation>
    <scope>FUNCTION IN ACRAB-TOLC EFFLUX SYSTEM</scope>
    <scope>INTERACTION WITH ACRA</scope>
    <scope>SUBUNIT</scope>
    <scope>SUBCELLULAR LOCATION</scope>
    <scope>DISRUPTION PHENOTYPE</scope>
    <source>
        <strain>K12 / MC1061 / ATCC 53338 / DSM 7140</strain>
    </source>
</reference>
<reference key="12">
    <citation type="journal article" date="2005" name="J. Biol. Chem.">
        <title>Protein complexes of the Escherichia coli cell envelope.</title>
        <authorList>
            <person name="Stenberg F."/>
            <person name="Chovanec P."/>
            <person name="Maslen S.L."/>
            <person name="Robinson C.V."/>
            <person name="Ilag L."/>
            <person name="von Heijne G."/>
            <person name="Daley D.O."/>
        </authorList>
    </citation>
    <scope>SUBUNIT</scope>
    <scope>SUBCELLULAR LOCATION</scope>
    <source>
        <strain>BL21-DE3</strain>
    </source>
</reference>
<reference key="13">
    <citation type="journal article" date="2009" name="J. Biol. Chem.">
        <title>MacB ABC transporter is a dimer whose ATPase activity and macrolide-binding capacity are regulated by the membrane fusion protein MacA.</title>
        <authorList>
            <person name="Lin H.T."/>
            <person name="Bavro V.N."/>
            <person name="Barrera N.P."/>
            <person name="Frankish H.M."/>
            <person name="Velamakanni S."/>
            <person name="van Veen H.W."/>
            <person name="Robinson C.V."/>
            <person name="Borges-Walmsley M.I."/>
            <person name="Walmsley A.R."/>
        </authorList>
    </citation>
    <scope>FUNCTION IN MACAB-TOLC EFFLUX SYSTEM</scope>
    <scope>SUBUNIT</scope>
    <scope>INTERACTION WITH MACA</scope>
</reference>
<reference key="14">
    <citation type="journal article" date="2009" name="Proc. Natl. Acad. Sci. U.S.A.">
        <title>The assembled structure of a complete tripartite bacterial multidrug efflux pump.</title>
        <authorList>
            <person name="Symmons M.F."/>
            <person name="Bokma E."/>
            <person name="Koronakis E."/>
            <person name="Hughes C."/>
            <person name="Koronakis V."/>
        </authorList>
    </citation>
    <scope>SUBUNIT</scope>
</reference>
<reference key="15">
    <citation type="journal article" date="2009" name="Proc. Natl. Acad. Sci. U.S.A.">
        <title>Kinetic control of TolC recruitment by multidrug efflux complexes.</title>
        <authorList>
            <person name="Tikhonova E.B."/>
            <person name="Dastidar V."/>
            <person name="Rybenkov V.V."/>
            <person name="Zgurskaya H.I."/>
        </authorList>
    </citation>
    <scope>INTERACTION WITH ACRA; EMRA AND MACA</scope>
</reference>
<reference key="16">
    <citation type="journal article" date="2011" name="J. Biol. Chem.">
        <title>Functional implications of an intermeshing cogwheel-like interaction between TolC and MacA in the action of macrolide-specific efflux pump MacAB-TolC.</title>
        <authorList>
            <person name="Xu Y."/>
            <person name="Song S."/>
            <person name="Moeller A."/>
            <person name="Kim N."/>
            <person name="Piao S."/>
            <person name="Sim S.H."/>
            <person name="Kang M."/>
            <person name="Yu W."/>
            <person name="Cho H.S."/>
            <person name="Chang I."/>
            <person name="Lee K."/>
            <person name="Ha N.C."/>
        </authorList>
    </citation>
    <scope>INTERACTION WITH MACA</scope>
</reference>
<reference key="17">
    <citation type="journal article" date="2011" name="J. Biol. Chem.">
        <title>Membrane localization of small proteins in Escherichia coli.</title>
        <authorList>
            <person name="Fontaine F."/>
            <person name="Fuchs R.T."/>
            <person name="Storz G."/>
        </authorList>
    </citation>
    <scope>SUBCELLULAR LOCATION</scope>
    <source>
        <strain>K12 / MG1655 / ATCC 47076</strain>
    </source>
</reference>
<reference key="18">
    <citation type="journal article" date="2012" name="Biochem. Soc. Trans.">
        <title>Pathways of colicin import: utilization of BtuB, OmpF porin and the TolC drug-export protein.</title>
        <authorList>
            <person name="Zakharov S.D."/>
            <person name="Sharma O."/>
            <person name="Zhalnina M."/>
            <person name="Yamashita E."/>
            <person name="Cramer W.A."/>
        </authorList>
    </citation>
    <scope>FUNCTION IN COLICIN E1 IMPORT</scope>
</reference>
<reference key="19">
    <citation type="journal article" date="2000" name="Nature">
        <title>Crystal structure of the bacterial membrane protein TolC central to multidrug efflux and protein export.</title>
        <authorList>
            <person name="Koronakis V."/>
            <person name="Sharff A."/>
            <person name="Koronakis E."/>
            <person name="Luisi B."/>
            <person name="Hughes C."/>
        </authorList>
    </citation>
    <scope>X-RAY CRYSTALLOGRAPHY (2.1 ANGSTROMS) OF 23-450</scope>
    <scope>DOMAIN</scope>
</reference>
<reference key="20">
    <citation type="journal article" date="2004" name="J. Mol. Biol.">
        <title>Structure of the ligand-blocked periplasmic entrance of the bacterial multidrug efflux protein TolC.</title>
        <authorList>
            <person name="Higgins M.K."/>
            <person name="Eswaran J."/>
            <person name="Edwards P."/>
            <person name="Schertler G.F."/>
            <person name="Hughes C."/>
            <person name="Koronakis V."/>
        </authorList>
    </citation>
    <scope>X-RAY CRYSTALLOGRAPHY (2.75 ANGSTROMS) OF 23-493 IN COMPLEX WITH HEXAAMMINECOBALT(3+)</scope>
    <scope>ACTIVITY REGULATION</scope>
    <scope>MUTAGENESIS OF ASP-393 AND ASP-396</scope>
</reference>
<reference key="21">
    <citation type="journal article" date="2008" name="Mol. Cell">
        <title>Assembly and channel opening in a bacterial drug efflux machine.</title>
        <authorList>
            <person name="Bavro V.N."/>
            <person name="Pietras Z."/>
            <person name="Furnham N."/>
            <person name="Perez-Cano L."/>
            <person name="Fernandez-Recio J."/>
            <person name="Pei X.Y."/>
            <person name="Misra R."/>
            <person name="Luisi B."/>
        </authorList>
    </citation>
    <scope>X-RAY CRYSTALLOGRAPHY (3.20 ANGSTROMS) OF 3-450 OF MUTANT PHE-384/GLU-389</scope>
    <scope>MUTAGENESIS OF TYR-384 AND ARG-389</scope>
</reference>
<reference key="22">
    <citation type="journal article" date="2011" name="Proc. Natl. Acad. Sci. U.S.A.">
        <title>Structures of sequential open states in a symmetrical opening transition of the TolC exit duct.</title>
        <authorList>
            <person name="Pei X.Y."/>
            <person name="Hinchliffe P."/>
            <person name="Symmons M.F."/>
            <person name="Koronakis E."/>
            <person name="Benz R."/>
            <person name="Hughes C."/>
            <person name="Koronakis V."/>
        </authorList>
    </citation>
    <scope>X-RAY CRYSTALLOGRAPHY (2.85 ANGSTROMS) OF 23-450 OF MUTANTS</scope>
</reference>
<feature type="signal peptide" evidence="14 16 17">
    <location>
        <begin position="1"/>
        <end position="22"/>
    </location>
</feature>
<feature type="chain" id="PRO_0000013352" description="Outer membrane protein TolC">
    <location>
        <begin position="23"/>
        <end position="493"/>
    </location>
</feature>
<feature type="topological domain" description="Periplasmic">
    <location>
        <begin position="23"/>
        <end position="62"/>
    </location>
</feature>
<feature type="transmembrane region" description="Beta stranded; Name=S1">
    <location>
        <begin position="63"/>
        <end position="74"/>
    </location>
</feature>
<feature type="topological domain" description="Extracellular">
    <location>
        <begin position="75"/>
        <end position="82"/>
    </location>
</feature>
<feature type="transmembrane region" description="Beta stranded; Name=S2">
    <location>
        <begin position="83"/>
        <end position="96"/>
    </location>
</feature>
<feature type="topological domain" description="Periplasmic">
    <location>
        <begin position="97"/>
        <end position="268"/>
    </location>
</feature>
<feature type="transmembrane region" description="Beta stranded; Name=S4">
    <location>
        <begin position="269"/>
        <end position="279"/>
    </location>
</feature>
<feature type="topological domain" description="Extracellular">
    <location>
        <begin position="280"/>
        <end position="300"/>
    </location>
</feature>
<feature type="transmembrane region" description="Beta stranded; Name=S5">
    <location>
        <begin position="301"/>
        <end position="311"/>
    </location>
</feature>
<feature type="topological domain" description="Periplasmic">
    <location>
        <begin position="312"/>
        <end position="493"/>
    </location>
</feature>
<feature type="repeat" description="1">
    <location>
        <begin position="23"/>
        <end position="230"/>
    </location>
</feature>
<feature type="repeat" description="2">
    <location>
        <begin position="231"/>
        <end position="446"/>
    </location>
</feature>
<feature type="region of interest" description="Disordered" evidence="1">
    <location>
        <begin position="270"/>
        <end position="298"/>
    </location>
</feature>
<feature type="region of interest" description="Disordered" evidence="1">
    <location>
        <begin position="446"/>
        <end position="493"/>
    </location>
</feature>
<feature type="compositionally biased region" description="Polar residues" evidence="1">
    <location>
        <begin position="272"/>
        <end position="287"/>
    </location>
</feature>
<feature type="compositionally biased region" description="Polar residues" evidence="1">
    <location>
        <begin position="446"/>
        <end position="459"/>
    </location>
</feature>
<feature type="compositionally biased region" description="Polar residues" evidence="1">
    <location>
        <begin position="475"/>
        <end position="493"/>
    </location>
</feature>
<feature type="mutagenesis site" description="Partial channel opening. Increases sensitivity to vancomycin, by allowing its passive diffusion across the outer membrane; when associated with E-389." evidence="7">
    <original>Y</original>
    <variation>F</variation>
    <location>
        <position position="384"/>
    </location>
</feature>
<feature type="mutagenesis site" description="Partial channel opening. Increases sensitivity to vancomycin, by allowing its passive diffusion across the outer membrane; when associated with F-382." evidence="7">
    <original>R</original>
    <variation>E</variation>
    <location>
        <position position="389"/>
    </location>
</feature>
<feature type="mutagenesis site" description="Decreases inhibition by hexaamminecobalt(3+)." evidence="5">
    <original>D</original>
    <variation>A</variation>
    <location>
        <position position="393"/>
    </location>
</feature>
<feature type="mutagenesis site" description="Decreases inhibition by hexaamminecobalt(3+)." evidence="5">
    <original>D</original>
    <variation>A</variation>
    <location>
        <position position="396"/>
    </location>
</feature>
<feature type="sequence conflict" description="In Ref. 1; CAA24914." evidence="18" ref="1">
    <original>N</original>
    <variation>K</variation>
    <location>
        <position position="178"/>
    </location>
</feature>
<feature type="sequence conflict" description="In Ref. 2; CAA37982." evidence="18" ref="2">
    <original>V</original>
    <variation>L</variation>
    <location>
        <position position="191"/>
    </location>
</feature>
<feature type="sequence conflict" description="In Ref. 1; CAA24914." evidence="18" ref="1">
    <original>QL</original>
    <variation>HV</variation>
    <location>
        <begin position="203"/>
        <end position="204"/>
    </location>
</feature>
<feature type="sequence conflict" description="In Ref. 1; CAA24914." evidence="18" ref="1">
    <original>EL</original>
    <variation>GT</variation>
    <location>
        <begin position="214"/>
        <end position="215"/>
    </location>
</feature>
<feature type="sequence conflict" description="In Ref. 1; CAA24914." evidence="18" ref="1">
    <original>QIRQAQDGHLPTL</original>
    <variation>KFARRRMVTYRLW</variation>
    <location>
        <begin position="258"/>
        <end position="270"/>
    </location>
</feature>
<feature type="sequence conflict" description="In Ref. 1; CAA24914." evidence="18" ref="1">
    <original>ISDTSYSGSKTRGAAGTQ</original>
    <variation>FLTPLIAVRKPCAAVP</variation>
    <location>
        <begin position="278"/>
        <end position="295"/>
    </location>
</feature>
<feature type="sequence conflict" description="In Ref. 1; CAA24914." evidence="18" ref="1">
    <original>K</original>
    <variation>T</variation>
    <location>
        <position position="325"/>
    </location>
</feature>
<feature type="sequence conflict" description="In Ref. 1; CAA24914." evidence="18" ref="1">
    <original>SEQLESAHRSVVQTVRSSFN</original>
    <variation>ASTWKVPIVASCQRAFCFS</variation>
    <location>
        <begin position="335"/>
        <end position="354"/>
    </location>
</feature>
<feature type="sequence conflict" description="In Ref. 1; CAA24914." evidence="18" ref="1">
    <original>AYKQAV</original>
    <variation>RYTQAA</variation>
    <location>
        <begin position="365"/>
        <end position="370"/>
    </location>
</feature>
<feature type="sequence conflict" description="In Ref. 1; CAA24914." evidence="18" ref="1">
    <original>TLYNAKQELANA</original>
    <variation>SCTAQARAGNP</variation>
    <location>
        <begin position="400"/>
        <end position="411"/>
    </location>
</feature>
<feature type="sequence conflict" description="In Ref. 1; CAA24914." evidence="18" ref="1">
    <original>V</original>
    <variation>I</variation>
    <location>
        <position position="445"/>
    </location>
</feature>
<feature type="helix" evidence="19">
    <location>
        <begin position="25"/>
        <end position="35"/>
    </location>
</feature>
<feature type="helix" evidence="19">
    <location>
        <begin position="37"/>
        <end position="57"/>
    </location>
</feature>
<feature type="helix" evidence="19">
    <location>
        <begin position="58"/>
        <end position="60"/>
    </location>
</feature>
<feature type="strand" evidence="19">
    <location>
        <begin position="63"/>
        <end position="75"/>
    </location>
</feature>
<feature type="strand" evidence="19">
    <location>
        <begin position="77"/>
        <end position="79"/>
    </location>
</feature>
<feature type="strand" evidence="19">
    <location>
        <begin position="83"/>
        <end position="98"/>
    </location>
</feature>
<feature type="helix" evidence="19">
    <location>
        <begin position="100"/>
        <end position="167"/>
    </location>
</feature>
<feature type="strand" evidence="21">
    <location>
        <begin position="168"/>
        <end position="170"/>
    </location>
</feature>
<feature type="helix" evidence="19">
    <location>
        <begin position="173"/>
        <end position="208"/>
    </location>
</feature>
<feature type="strand" evidence="19">
    <location>
        <begin position="213"/>
        <end position="218"/>
    </location>
</feature>
<feature type="turn" evidence="19">
    <location>
        <begin position="220"/>
        <end position="222"/>
    </location>
</feature>
<feature type="helix" evidence="19">
    <location>
        <begin position="231"/>
        <end position="241"/>
    </location>
</feature>
<feature type="helix" evidence="19">
    <location>
        <begin position="243"/>
        <end position="263"/>
    </location>
</feature>
<feature type="helix" evidence="19">
    <location>
        <begin position="264"/>
        <end position="266"/>
    </location>
</feature>
<feature type="strand" evidence="19">
    <location>
        <begin position="269"/>
        <end position="279"/>
    </location>
</feature>
<feature type="strand" evidence="19">
    <location>
        <begin position="282"/>
        <end position="285"/>
    </location>
</feature>
<feature type="strand" evidence="19">
    <location>
        <begin position="288"/>
        <end position="291"/>
    </location>
</feature>
<feature type="turn" evidence="22">
    <location>
        <begin position="292"/>
        <end position="294"/>
    </location>
</feature>
<feature type="strand" evidence="19">
    <location>
        <begin position="302"/>
        <end position="316"/>
    </location>
</feature>
<feature type="helix" evidence="19">
    <location>
        <begin position="319"/>
        <end position="385"/>
    </location>
</feature>
<feature type="strand" evidence="20">
    <location>
        <begin position="386"/>
        <end position="388"/>
    </location>
</feature>
<feature type="helix" evidence="19">
    <location>
        <begin position="391"/>
        <end position="426"/>
    </location>
</feature>
<feature type="helix" evidence="19">
    <location>
        <begin position="431"/>
        <end position="439"/>
    </location>
</feature>
<feature type="strand" evidence="19">
    <location>
        <begin position="441"/>
        <end position="448"/>
    </location>
</feature>
<name>TOLC_ECOLI</name>
<accession>P02930</accession>
<accession>Q2M9G5</accession>
<proteinExistence type="evidence at protein level"/>
<comment type="function">
    <text evidence="3 4 8 13 14">Outer membrane channel, which is required for the function of several efflux systems such as AcrAB-TolC, AcrEF-TolC, EmrAB-TolC and MacAB-TolC. These systems are involved in export of antibiotics and other toxic compounds from the cell. TolC is also involved in import of colicin E1 into the cells.</text>
</comment>
<comment type="activity regulation">
    <text evidence="5">In vitro, inhibited by hexaamminecobalt(3+).</text>
</comment>
<comment type="subunit">
    <text evidence="4 5 6 8 9 10 11 15">Homotrimer. Part of tripartite efflux systems, which are composed of an inner membrane transporter, a periplasmic membrane fusion protein, and an outer membrane component, TolC. The complexes form a large protein conduit and can translocate molecules across both the inner and outer membranes. TolC interacts with the membrane fusion proteins AcrA, EmrA and MacA.</text>
</comment>
<comment type="interaction">
    <interactant intactId="EBI-875614">
        <id>P02930</id>
    </interactant>
    <interactant intactId="EBI-875601">
        <id>P0AE06</id>
        <label>acrA</label>
    </interactant>
    <organismsDiffer>false</organismsDiffer>
    <experiments>2</experiments>
</comment>
<comment type="interaction">
    <interactant intactId="EBI-875614">
        <id>P02930</id>
    </interactant>
    <interactant intactId="EBI-551961">
        <id>P75830</id>
        <label>macA</label>
    </interactant>
    <organismsDiffer>false</organismsDiffer>
    <experiments>3</experiments>
</comment>
<comment type="interaction">
    <interactant intactId="EBI-875614">
        <id>P02930</id>
    </interactant>
    <interactant intactId="EBI-875614">
        <id>P02930</id>
        <label>tolC</label>
    </interactant>
    <organismsDiffer>false</organismsDiffer>
    <experiments>6</experiments>
</comment>
<comment type="subcellular location">
    <subcellularLocation>
        <location evidence="4 6 12 14 15">Cell outer membrane</location>
        <topology evidence="4 6 12 14 15">Multi-pass membrane protein</topology>
    </subcellularLocation>
</comment>
<comment type="domain">
    <text evidence="2">Forms a continuous, solvent-accessible conduit: a 'channel-tunnel' over 140 Angstroms long that spans both the outer membrane and periplasmic space. The periplasmic or proximal end of the tunnel is sealed by sets of coiled helices.</text>
</comment>
<comment type="disruption phenotype">
    <text evidence="4">Cannot grow on efflux substrates novobiocin or fusidic acid.</text>
</comment>
<comment type="similarity">
    <text evidence="18">Belongs to the outer membrane factor (OMF) (TC 1.B.17) family.</text>
</comment>
<comment type="sequence caution" evidence="18">
    <conflict type="erroneous initiation">
        <sequence resource="EMBL-CDS" id="AAA69203"/>
    </conflict>
    <text>Extended N-terminus.</text>
</comment>
<comment type="sequence caution" evidence="18">
    <conflict type="erroneous initiation">
        <sequence resource="EMBL-CDS" id="CAA24751"/>
    </conflict>
    <text>Extended N-terminus.</text>
</comment>
<comment type="sequence caution" evidence="18">
    <conflict type="erroneous initiation">
        <sequence resource="EMBL-CDS" id="CAA37982"/>
    </conflict>
    <text>Extended N-terminus.</text>
</comment>